<comment type="function">
    <text evidence="1">Catalyzes the transfer of the diacylglyceryl group from phosphatidylglycerol to the sulfhydryl group of the N-terminal cysteine of a prolipoprotein, the first step in the formation of mature lipoproteins.</text>
</comment>
<comment type="catalytic activity">
    <reaction evidence="1">
        <text>L-cysteinyl-[prolipoprotein] + a 1,2-diacyl-sn-glycero-3-phospho-(1'-sn-glycerol) = an S-1,2-diacyl-sn-glyceryl-L-cysteinyl-[prolipoprotein] + sn-glycerol 1-phosphate + H(+)</text>
        <dbReference type="Rhea" id="RHEA:56712"/>
        <dbReference type="Rhea" id="RHEA-COMP:14679"/>
        <dbReference type="Rhea" id="RHEA-COMP:14680"/>
        <dbReference type="ChEBI" id="CHEBI:15378"/>
        <dbReference type="ChEBI" id="CHEBI:29950"/>
        <dbReference type="ChEBI" id="CHEBI:57685"/>
        <dbReference type="ChEBI" id="CHEBI:64716"/>
        <dbReference type="ChEBI" id="CHEBI:140658"/>
        <dbReference type="EC" id="2.5.1.145"/>
    </reaction>
</comment>
<comment type="pathway">
    <text evidence="1">Protein modification; lipoprotein biosynthesis (diacylglyceryl transfer).</text>
</comment>
<comment type="subcellular location">
    <subcellularLocation>
        <location evidence="1">Cell membrane</location>
        <topology evidence="1">Multi-pass membrane protein</topology>
    </subcellularLocation>
</comment>
<comment type="similarity">
    <text evidence="1">Belongs to the Lgt family.</text>
</comment>
<name>LGT_PEDPA</name>
<keyword id="KW-1003">Cell membrane</keyword>
<keyword id="KW-0472">Membrane</keyword>
<keyword id="KW-0808">Transferase</keyword>
<keyword id="KW-0812">Transmembrane</keyword>
<keyword id="KW-1133">Transmembrane helix</keyword>
<accession>Q03GY4</accession>
<organism>
    <name type="scientific">Pediococcus pentosaceus (strain ATCC 25745 / CCUG 21536 / LMG 10740 / 183-1w)</name>
    <dbReference type="NCBI Taxonomy" id="278197"/>
    <lineage>
        <taxon>Bacteria</taxon>
        <taxon>Bacillati</taxon>
        <taxon>Bacillota</taxon>
        <taxon>Bacilli</taxon>
        <taxon>Lactobacillales</taxon>
        <taxon>Lactobacillaceae</taxon>
        <taxon>Pediococcus</taxon>
    </lineage>
</organism>
<gene>
    <name evidence="1" type="primary">lgt</name>
    <name type="ordered locus">PEPE_0442</name>
</gene>
<reference key="1">
    <citation type="journal article" date="2006" name="Proc. Natl. Acad. Sci. U.S.A.">
        <title>Comparative genomics of the lactic acid bacteria.</title>
        <authorList>
            <person name="Makarova K.S."/>
            <person name="Slesarev A."/>
            <person name="Wolf Y.I."/>
            <person name="Sorokin A."/>
            <person name="Mirkin B."/>
            <person name="Koonin E.V."/>
            <person name="Pavlov A."/>
            <person name="Pavlova N."/>
            <person name="Karamychev V."/>
            <person name="Polouchine N."/>
            <person name="Shakhova V."/>
            <person name="Grigoriev I."/>
            <person name="Lou Y."/>
            <person name="Rohksar D."/>
            <person name="Lucas S."/>
            <person name="Huang K."/>
            <person name="Goodstein D.M."/>
            <person name="Hawkins T."/>
            <person name="Plengvidhya V."/>
            <person name="Welker D."/>
            <person name="Hughes J."/>
            <person name="Goh Y."/>
            <person name="Benson A."/>
            <person name="Baldwin K."/>
            <person name="Lee J.-H."/>
            <person name="Diaz-Muniz I."/>
            <person name="Dosti B."/>
            <person name="Smeianov V."/>
            <person name="Wechter W."/>
            <person name="Barabote R."/>
            <person name="Lorca G."/>
            <person name="Altermann E."/>
            <person name="Barrangou R."/>
            <person name="Ganesan B."/>
            <person name="Xie Y."/>
            <person name="Rawsthorne H."/>
            <person name="Tamir D."/>
            <person name="Parker C."/>
            <person name="Breidt F."/>
            <person name="Broadbent J.R."/>
            <person name="Hutkins R."/>
            <person name="O'Sullivan D."/>
            <person name="Steele J."/>
            <person name="Unlu G."/>
            <person name="Saier M.H. Jr."/>
            <person name="Klaenhammer T."/>
            <person name="Richardson P."/>
            <person name="Kozyavkin S."/>
            <person name="Weimer B.C."/>
            <person name="Mills D.A."/>
        </authorList>
    </citation>
    <scope>NUCLEOTIDE SEQUENCE [LARGE SCALE GENOMIC DNA]</scope>
    <source>
        <strain>ATCC 25745 / CCUG 21536 / LMG 10740 / 183-1w</strain>
    </source>
</reference>
<sequence>MNLTLGALNPIAFNLGGIQVHWYGIIIASAVVLATILAVQEAKRRRIDPDSIYDLILWALPVAIITARMYYVIFEWGYYQNHVDEIVRVWDGGIAIYGALIGAGIVVYLFCRANWIPVWLMLDIIAPVLIMAQGIGRWGNFMNQEAFGRITSLTFLQSLHLPHFIIQQMLIDGAYRQPTFLYESLWDILGFIVLMSLRHKKHLFKQGEVFLSYVIWYAFGRFFVEGMRTDSLMLLGIRVSQWLSVILFIGAIGILVFRRKSMRERLPDYLEGNQLSPK</sequence>
<dbReference type="EC" id="2.5.1.145" evidence="1"/>
<dbReference type="EMBL" id="CP000422">
    <property type="protein sequence ID" value="ABJ67538.1"/>
    <property type="molecule type" value="Genomic_DNA"/>
</dbReference>
<dbReference type="RefSeq" id="WP_002834089.1">
    <property type="nucleotide sequence ID" value="NC_008525.1"/>
</dbReference>
<dbReference type="SMR" id="Q03GY4"/>
<dbReference type="STRING" id="278197.PEPE_0442"/>
<dbReference type="GeneID" id="33062647"/>
<dbReference type="KEGG" id="ppe:PEPE_0442"/>
<dbReference type="eggNOG" id="COG0682">
    <property type="taxonomic scope" value="Bacteria"/>
</dbReference>
<dbReference type="HOGENOM" id="CLU_013386_0_1_9"/>
<dbReference type="OrthoDB" id="871140at2"/>
<dbReference type="UniPathway" id="UPA00664"/>
<dbReference type="Proteomes" id="UP000000773">
    <property type="component" value="Chromosome"/>
</dbReference>
<dbReference type="GO" id="GO:0005886">
    <property type="term" value="C:plasma membrane"/>
    <property type="evidence" value="ECO:0007669"/>
    <property type="project" value="UniProtKB-SubCell"/>
</dbReference>
<dbReference type="GO" id="GO:0008961">
    <property type="term" value="F:phosphatidylglycerol-prolipoprotein diacylglyceryl transferase activity"/>
    <property type="evidence" value="ECO:0007669"/>
    <property type="project" value="UniProtKB-UniRule"/>
</dbReference>
<dbReference type="GO" id="GO:0042158">
    <property type="term" value="P:lipoprotein biosynthetic process"/>
    <property type="evidence" value="ECO:0007669"/>
    <property type="project" value="UniProtKB-UniRule"/>
</dbReference>
<dbReference type="HAMAP" id="MF_01147">
    <property type="entry name" value="Lgt"/>
    <property type="match status" value="1"/>
</dbReference>
<dbReference type="InterPro" id="IPR001640">
    <property type="entry name" value="Lgt"/>
</dbReference>
<dbReference type="NCBIfam" id="TIGR00544">
    <property type="entry name" value="lgt"/>
    <property type="match status" value="1"/>
</dbReference>
<dbReference type="PANTHER" id="PTHR30589:SF0">
    <property type="entry name" value="PHOSPHATIDYLGLYCEROL--PROLIPOPROTEIN DIACYLGLYCERYL TRANSFERASE"/>
    <property type="match status" value="1"/>
</dbReference>
<dbReference type="PANTHER" id="PTHR30589">
    <property type="entry name" value="PROLIPOPROTEIN DIACYLGLYCERYL TRANSFERASE"/>
    <property type="match status" value="1"/>
</dbReference>
<dbReference type="Pfam" id="PF01790">
    <property type="entry name" value="LGT"/>
    <property type="match status" value="1"/>
</dbReference>
<dbReference type="PROSITE" id="PS01311">
    <property type="entry name" value="LGT"/>
    <property type="match status" value="1"/>
</dbReference>
<evidence type="ECO:0000255" key="1">
    <source>
        <dbReference type="HAMAP-Rule" id="MF_01147"/>
    </source>
</evidence>
<feature type="chain" id="PRO_1000053463" description="Phosphatidylglycerol--prolipoprotein diacylglyceryl transferase">
    <location>
        <begin position="1"/>
        <end position="278"/>
    </location>
</feature>
<feature type="transmembrane region" description="Helical" evidence="1">
    <location>
        <begin position="18"/>
        <end position="38"/>
    </location>
</feature>
<feature type="transmembrane region" description="Helical" evidence="1">
    <location>
        <begin position="55"/>
        <end position="75"/>
    </location>
</feature>
<feature type="transmembrane region" description="Helical" evidence="1">
    <location>
        <begin position="90"/>
        <end position="110"/>
    </location>
</feature>
<feature type="transmembrane region" description="Helical" evidence="1">
    <location>
        <begin position="115"/>
        <end position="135"/>
    </location>
</feature>
<feature type="transmembrane region" description="Helical" evidence="1">
    <location>
        <begin position="177"/>
        <end position="197"/>
    </location>
</feature>
<feature type="transmembrane region" description="Helical" evidence="1">
    <location>
        <begin position="207"/>
        <end position="227"/>
    </location>
</feature>
<feature type="transmembrane region" description="Helical" evidence="1">
    <location>
        <begin position="237"/>
        <end position="257"/>
    </location>
</feature>
<feature type="binding site" evidence="1">
    <location>
        <position position="137"/>
    </location>
    <ligand>
        <name>a 1,2-diacyl-sn-glycero-3-phospho-(1'-sn-glycerol)</name>
        <dbReference type="ChEBI" id="CHEBI:64716"/>
    </ligand>
</feature>
<protein>
    <recommendedName>
        <fullName evidence="1">Phosphatidylglycerol--prolipoprotein diacylglyceryl transferase</fullName>
        <ecNumber evidence="1">2.5.1.145</ecNumber>
    </recommendedName>
</protein>
<proteinExistence type="inferred from homology"/>